<organism>
    <name type="scientific">Burkholderia mallei (strain NCTC 10229)</name>
    <dbReference type="NCBI Taxonomy" id="412022"/>
    <lineage>
        <taxon>Bacteria</taxon>
        <taxon>Pseudomonadati</taxon>
        <taxon>Pseudomonadota</taxon>
        <taxon>Betaproteobacteria</taxon>
        <taxon>Burkholderiales</taxon>
        <taxon>Burkholderiaceae</taxon>
        <taxon>Burkholderia</taxon>
        <taxon>pseudomallei group</taxon>
    </lineage>
</organism>
<dbReference type="EMBL" id="CP000546">
    <property type="protein sequence ID" value="ABN03158.1"/>
    <property type="molecule type" value="Genomic_DNA"/>
</dbReference>
<dbReference type="RefSeq" id="WP_004193590.1">
    <property type="nucleotide sequence ID" value="NC_008836.1"/>
</dbReference>
<dbReference type="SMR" id="A2SAS9"/>
<dbReference type="GeneID" id="92979425"/>
<dbReference type="KEGG" id="bml:BMA10229_A3107"/>
<dbReference type="HOGENOM" id="CLU_005965_2_1_4"/>
<dbReference type="Proteomes" id="UP000002283">
    <property type="component" value="Chromosome I"/>
</dbReference>
<dbReference type="GO" id="GO:0005524">
    <property type="term" value="F:ATP binding"/>
    <property type="evidence" value="ECO:0007669"/>
    <property type="project" value="UniProtKB-KW"/>
</dbReference>
<dbReference type="GO" id="GO:0016887">
    <property type="term" value="F:ATP hydrolysis activity"/>
    <property type="evidence" value="ECO:0007669"/>
    <property type="project" value="UniProtKB-UniRule"/>
</dbReference>
<dbReference type="GO" id="GO:0140662">
    <property type="term" value="F:ATP-dependent protein folding chaperone"/>
    <property type="evidence" value="ECO:0007669"/>
    <property type="project" value="InterPro"/>
</dbReference>
<dbReference type="GO" id="GO:0051082">
    <property type="term" value="F:unfolded protein binding"/>
    <property type="evidence" value="ECO:0007669"/>
    <property type="project" value="InterPro"/>
</dbReference>
<dbReference type="GO" id="GO:0016226">
    <property type="term" value="P:iron-sulfur cluster assembly"/>
    <property type="evidence" value="ECO:0007669"/>
    <property type="project" value="InterPro"/>
</dbReference>
<dbReference type="FunFam" id="3.30.420.40:FF:000046">
    <property type="entry name" value="Chaperone protein HscA"/>
    <property type="match status" value="1"/>
</dbReference>
<dbReference type="FunFam" id="2.60.34.10:FF:000005">
    <property type="entry name" value="Chaperone protein HscA homolog"/>
    <property type="match status" value="1"/>
</dbReference>
<dbReference type="Gene3D" id="1.20.1270.10">
    <property type="match status" value="1"/>
</dbReference>
<dbReference type="Gene3D" id="3.30.420.40">
    <property type="match status" value="2"/>
</dbReference>
<dbReference type="Gene3D" id="3.90.640.10">
    <property type="entry name" value="Actin, Chain A, domain 4"/>
    <property type="match status" value="1"/>
</dbReference>
<dbReference type="Gene3D" id="2.60.34.10">
    <property type="entry name" value="Substrate Binding Domain Of DNAk, Chain A, domain 1"/>
    <property type="match status" value="1"/>
</dbReference>
<dbReference type="HAMAP" id="MF_00679">
    <property type="entry name" value="HscA"/>
    <property type="match status" value="1"/>
</dbReference>
<dbReference type="InterPro" id="IPR043129">
    <property type="entry name" value="ATPase_NBD"/>
</dbReference>
<dbReference type="InterPro" id="IPR018181">
    <property type="entry name" value="Heat_shock_70_CS"/>
</dbReference>
<dbReference type="InterPro" id="IPR029048">
    <property type="entry name" value="HSP70_C_sf"/>
</dbReference>
<dbReference type="InterPro" id="IPR029047">
    <property type="entry name" value="HSP70_peptide-bd_sf"/>
</dbReference>
<dbReference type="InterPro" id="IPR013126">
    <property type="entry name" value="Hsp_70_fam"/>
</dbReference>
<dbReference type="InterPro" id="IPR010236">
    <property type="entry name" value="ISC_FeS_clus_asmbl_HscA"/>
</dbReference>
<dbReference type="NCBIfam" id="TIGR01991">
    <property type="entry name" value="HscA"/>
    <property type="match status" value="1"/>
</dbReference>
<dbReference type="NCBIfam" id="NF003520">
    <property type="entry name" value="PRK05183.1"/>
    <property type="match status" value="1"/>
</dbReference>
<dbReference type="PANTHER" id="PTHR19375">
    <property type="entry name" value="HEAT SHOCK PROTEIN 70KDA"/>
    <property type="match status" value="1"/>
</dbReference>
<dbReference type="Pfam" id="PF00012">
    <property type="entry name" value="HSP70"/>
    <property type="match status" value="1"/>
</dbReference>
<dbReference type="PRINTS" id="PR00301">
    <property type="entry name" value="HEATSHOCK70"/>
</dbReference>
<dbReference type="SUPFAM" id="SSF53067">
    <property type="entry name" value="Actin-like ATPase domain"/>
    <property type="match status" value="2"/>
</dbReference>
<dbReference type="SUPFAM" id="SSF100934">
    <property type="entry name" value="Heat shock protein 70kD (HSP70), C-terminal subdomain"/>
    <property type="match status" value="1"/>
</dbReference>
<dbReference type="SUPFAM" id="SSF100920">
    <property type="entry name" value="Heat shock protein 70kD (HSP70), peptide-binding domain"/>
    <property type="match status" value="1"/>
</dbReference>
<dbReference type="PROSITE" id="PS00297">
    <property type="entry name" value="HSP70_1"/>
    <property type="match status" value="1"/>
</dbReference>
<dbReference type="PROSITE" id="PS00329">
    <property type="entry name" value="HSP70_2"/>
    <property type="match status" value="1"/>
</dbReference>
<dbReference type="PROSITE" id="PS01036">
    <property type="entry name" value="HSP70_3"/>
    <property type="match status" value="1"/>
</dbReference>
<gene>
    <name evidence="1" type="primary">hscA</name>
    <name type="ordered locus">BMA10229_A3107</name>
</gene>
<evidence type="ECO:0000255" key="1">
    <source>
        <dbReference type="HAMAP-Rule" id="MF_00679"/>
    </source>
</evidence>
<comment type="function">
    <text evidence="1">Chaperone involved in the maturation of iron-sulfur cluster-containing proteins. Has a low intrinsic ATPase activity which is markedly stimulated by HscB.</text>
</comment>
<comment type="similarity">
    <text evidence="1">Belongs to the heat shock protein 70 family.</text>
</comment>
<name>HSCA_BURM9</name>
<keyword id="KW-0067">ATP-binding</keyword>
<keyword id="KW-0143">Chaperone</keyword>
<keyword id="KW-0547">Nucleotide-binding</keyword>
<reference key="1">
    <citation type="journal article" date="2010" name="Genome Biol. Evol.">
        <title>Continuing evolution of Burkholderia mallei through genome reduction and large-scale rearrangements.</title>
        <authorList>
            <person name="Losada L."/>
            <person name="Ronning C.M."/>
            <person name="DeShazer D."/>
            <person name="Woods D."/>
            <person name="Fedorova N."/>
            <person name="Kim H.S."/>
            <person name="Shabalina S.A."/>
            <person name="Pearson T.R."/>
            <person name="Brinkac L."/>
            <person name="Tan P."/>
            <person name="Nandi T."/>
            <person name="Crabtree J."/>
            <person name="Badger J."/>
            <person name="Beckstrom-Sternberg S."/>
            <person name="Saqib M."/>
            <person name="Schutzer S.E."/>
            <person name="Keim P."/>
            <person name="Nierman W.C."/>
        </authorList>
    </citation>
    <scope>NUCLEOTIDE SEQUENCE [LARGE SCALE GENOMIC DNA]</scope>
    <source>
        <strain>NCTC 10229</strain>
    </source>
</reference>
<feature type="chain" id="PRO_1000044847" description="Chaperone protein HscA homolog">
    <location>
        <begin position="1"/>
        <end position="622"/>
    </location>
</feature>
<accession>A2SAS9</accession>
<proteinExistence type="inferred from homology"/>
<protein>
    <recommendedName>
        <fullName evidence="1">Chaperone protein HscA homolog</fullName>
    </recommendedName>
</protein>
<sequence>MALLQISEPGMAPAPHQRRLAVGIDLGTTNSLVAAVRNSIPEALPDDAGRVLLPSVVRYLDKGGRRIGHAAKEEAAIDPRNTIVSVKRFMGRGKAEVEGAANAPYEFVDAPGMVQIRTVDGVKSPVEVSAEILATLRQRAEDTLGDDLVGAVITVPAYFDDAQRQATKDAARLAGLNVLRLLNEPTAAAIAYGLDNGAEGLYAVYDLGGGTFDLSILKLTKGVFEVLAAGGDSALGGDDFDHLLFEHVLAQAGLEVAALAPEDVRLLLDRVRGAKEALSAAPQARVDVKLSTGEKLAQTITRDTFAALVEPLVQRTLGPTRKALRDAQVSAADIKGVVLVGGATRMPVIRDAVAKYFGQPPLVNLDPDQVVALGAAIQADLLAGNRSGGDDWLLLDVIPLSLGVETMGGLVEKIIPRNSTIPVARAQEFTTFKDGQTAMAIHVVQGERELVSDCRSLARFELRGIPPMTAGAARIRVTYQVDADGLLSVFAREQHSGVEASVVVKPSYGLGDDDIARMLEDSFKTAEVDMRARALREAQVEAQRLVEATEAALVADGDLLDASERATVDALVASLRALAPGDDADAIDTATKALAEGTDEFAARRMDKSIKRALAGRKLDEI</sequence>